<evidence type="ECO:0000250" key="1">
    <source>
        <dbReference type="UniProtKB" id="Q7L5D6"/>
    </source>
</evidence>
<evidence type="ECO:0000256" key="2">
    <source>
        <dbReference type="SAM" id="MobiDB-lite"/>
    </source>
</evidence>
<evidence type="ECO:0000305" key="3"/>
<comment type="function">
    <text evidence="1">As part of a cytosolic protein quality control complex, the bag6/bat3 complex, maintains misfolded and hydrophobic patches-containing proteins in a soluble state and participates in their proper delivery to the endoplasmic reticulum or alternatively can promote their sorting to the proteasome where they undergo degradation. The bag6/bat3 complex is involved in the post-translational delivery of tail-anchored/type II transmembrane proteins to the endoplasmic reticulum membrane. Similarly, the bag6/bat3 complex also functions as a sorting platform for proteins of the secretory pathway that are mislocalized to the cytosol either delivering them to the proteasome for degradation or to the endoplasmic reticulum. The bag6/bat3 complex also plays a role in the endoplasmic reticulum-associated degradation (ERAD), a quality control mechanism that eliminates unwanted proteins of the endoplasmic reticulum through their retrotranslocation to the cytosol and their targeting to the proteasome. It maintains these retrotranslocated proteins in an unfolded yet soluble state condition in the cytosol to ensure their proper delivery to the proteasome.</text>
</comment>
<comment type="subunit">
    <text evidence="1">Component of the bag6/bat3 complex.</text>
</comment>
<comment type="subcellular location">
    <subcellularLocation>
        <location evidence="1">Cytoplasm</location>
        <location evidence="1">Cytosol</location>
    </subcellularLocation>
</comment>
<comment type="similarity">
    <text evidence="3">Belongs to the GET4 family.</text>
</comment>
<feature type="chain" id="PRO_0000403726" description="Golgi to ER traffic protein 4 homolog B">
    <location>
        <begin position="1"/>
        <end position="325"/>
    </location>
</feature>
<feature type="region of interest" description="Disordered" evidence="2">
    <location>
        <begin position="1"/>
        <end position="22"/>
    </location>
</feature>
<feature type="region of interest" description="Disordered" evidence="2">
    <location>
        <begin position="306"/>
        <end position="325"/>
    </location>
</feature>
<feature type="compositionally biased region" description="Acidic residues" evidence="2">
    <location>
        <begin position="307"/>
        <end position="317"/>
    </location>
</feature>
<accession>Q6GLK9</accession>
<reference key="1">
    <citation type="submission" date="2004-06" db="EMBL/GenBank/DDBJ databases">
        <authorList>
            <consortium name="NIH - Xenopus Gene Collection (XGC) project"/>
        </authorList>
    </citation>
    <scope>NUCLEOTIDE SEQUENCE [LARGE SCALE MRNA]</scope>
    <source>
        <tissue>Brain</tissue>
    </source>
</reference>
<protein>
    <recommendedName>
        <fullName>Golgi to ER traffic protein 4 homolog B</fullName>
    </recommendedName>
</protein>
<proteinExistence type="evidence at transcript level"/>
<sequence>MAAAMAEQEGSKGSARNRGGVQRVEGKLRASVEKGDYYEAHQMYRTLFFRYMSQSKHIEARELMYSGALLFFSHSQRNSAADLSMLVLESLEKHEVKVTEELLENLAKLFSLMDPNSPERVAFVSRALKWSTGGSGKFGDPKLHQFLAITLWKEQNYYESRYHFLHSSDGEGCANMLVEYSSSRGYRSEVDMFVVQAVLQFLCLKNKTSASVVFTTYTQKHPSIERGPPFVQPLLNFIWFLLLAVEGGKLTVFTVLCEQYQPSLKRDPMYNEYLDRIGQLFFGLPPKQSSSYGGLLGNLLNSLMGSGEDDDVEDGQEDSSPIELD</sequence>
<gene>
    <name type="primary">get4-b</name>
</gene>
<keyword id="KW-0963">Cytoplasm</keyword>
<keyword id="KW-1185">Reference proteome</keyword>
<keyword id="KW-0813">Transport</keyword>
<organism>
    <name type="scientific">Xenopus laevis</name>
    <name type="common">African clawed frog</name>
    <dbReference type="NCBI Taxonomy" id="8355"/>
    <lineage>
        <taxon>Eukaryota</taxon>
        <taxon>Metazoa</taxon>
        <taxon>Chordata</taxon>
        <taxon>Craniata</taxon>
        <taxon>Vertebrata</taxon>
        <taxon>Euteleostomi</taxon>
        <taxon>Amphibia</taxon>
        <taxon>Batrachia</taxon>
        <taxon>Anura</taxon>
        <taxon>Pipoidea</taxon>
        <taxon>Pipidae</taxon>
        <taxon>Xenopodinae</taxon>
        <taxon>Xenopus</taxon>
        <taxon>Xenopus</taxon>
    </lineage>
</organism>
<name>GET4B_XENLA</name>
<dbReference type="EMBL" id="BC074468">
    <property type="protein sequence ID" value="AAH74468.1"/>
    <property type="molecule type" value="mRNA"/>
</dbReference>
<dbReference type="RefSeq" id="NP_001086312.1">
    <property type="nucleotide sequence ID" value="NM_001092843.1"/>
</dbReference>
<dbReference type="SMR" id="Q6GLK9"/>
<dbReference type="BioGRID" id="102904">
    <property type="interactions" value="1"/>
</dbReference>
<dbReference type="DNASU" id="444741"/>
<dbReference type="GeneID" id="444741"/>
<dbReference type="KEGG" id="xla:444741"/>
<dbReference type="AGR" id="Xenbase:XB-GENE-17330152"/>
<dbReference type="CTD" id="444741"/>
<dbReference type="Xenbase" id="XB-GENE-17330152">
    <property type="gene designation" value="get4.S"/>
</dbReference>
<dbReference type="OMA" id="LMDMMGM"/>
<dbReference type="OrthoDB" id="10252405at2759"/>
<dbReference type="Proteomes" id="UP000186698">
    <property type="component" value="Chromosome 9_10S"/>
</dbReference>
<dbReference type="Bgee" id="444741">
    <property type="expression patterns" value="Expressed in pancreas and 19 other cell types or tissues"/>
</dbReference>
<dbReference type="GO" id="GO:0071818">
    <property type="term" value="C:BAT3 complex"/>
    <property type="evidence" value="ECO:0000250"/>
    <property type="project" value="UniProtKB"/>
</dbReference>
<dbReference type="GO" id="GO:0005829">
    <property type="term" value="C:cytosol"/>
    <property type="evidence" value="ECO:0000250"/>
    <property type="project" value="UniProtKB"/>
</dbReference>
<dbReference type="GO" id="GO:0045048">
    <property type="term" value="P:protein insertion into ER membrane"/>
    <property type="evidence" value="ECO:0000250"/>
    <property type="project" value="UniProtKB"/>
</dbReference>
<dbReference type="GO" id="GO:0071816">
    <property type="term" value="P:tail-anchored membrane protein insertion into ER membrane"/>
    <property type="evidence" value="ECO:0000250"/>
    <property type="project" value="UniProtKB"/>
</dbReference>
<dbReference type="FunFam" id="1.25.40.10:FF:000060">
    <property type="entry name" value="Golgi to ER traffic protein 4 homolog"/>
    <property type="match status" value="1"/>
</dbReference>
<dbReference type="Gene3D" id="1.25.40.10">
    <property type="entry name" value="Tetratricopeptide repeat domain"/>
    <property type="match status" value="1"/>
</dbReference>
<dbReference type="InterPro" id="IPR007317">
    <property type="entry name" value="GET4"/>
</dbReference>
<dbReference type="InterPro" id="IPR011990">
    <property type="entry name" value="TPR-like_helical_dom_sf"/>
</dbReference>
<dbReference type="PANTHER" id="PTHR12875">
    <property type="entry name" value="GOLGI TO ER TRAFFIC PROTEIN 4 HOMOLOG"/>
    <property type="match status" value="1"/>
</dbReference>
<dbReference type="PANTHER" id="PTHR12875:SF0">
    <property type="entry name" value="GOLGI TO ER TRAFFIC PROTEIN 4 HOMOLOG"/>
    <property type="match status" value="1"/>
</dbReference>
<dbReference type="Pfam" id="PF04190">
    <property type="entry name" value="GET4"/>
    <property type="match status" value="1"/>
</dbReference>